<gene>
    <name type="primary">PLSC</name>
</gene>
<sequence>MRSFFLLCALVAVCNAVYTGVAYYDINAGCTGVAYRTSYTQTASCTPIPCTKNTDYQLSILQTCVSAIPQTKGTLEISSYPSHDCSGTPDVGVYNLNTCLPDEQGQFGYLTCNAQYICSDSACKSGCTATPFSDSCTATPRDSTTYKCIP</sequence>
<protein>
    <recommendedName>
        <fullName>Plasmin C</fullName>
    </recommendedName>
</protein>
<name>PLSC_PHYPO</name>
<reference key="1">
    <citation type="journal article" date="1990" name="Nucleic Acids Res.">
        <title>A plasmodial specific mRNA (plasmin C) from Physarum polycephalum encodes a small hydrophobic cysteine-rich protein.</title>
        <authorList>
            <person name="Girard Y."/>
            <person name="Lemieux G."/>
            <person name="Pallotta D."/>
        </authorList>
    </citation>
    <scope>NUCLEOTIDE SEQUENCE [MRNA]</scope>
    <source>
        <strain>M3C</strain>
    </source>
</reference>
<proteinExistence type="evidence at transcript level"/>
<accession>P19203</accession>
<organism>
    <name type="scientific">Physarum polycephalum</name>
    <name type="common">Slime mold</name>
    <dbReference type="NCBI Taxonomy" id="5791"/>
    <lineage>
        <taxon>Eukaryota</taxon>
        <taxon>Amoebozoa</taxon>
        <taxon>Evosea</taxon>
        <taxon>Eumycetozoa</taxon>
        <taxon>Myxogastria</taxon>
        <taxon>Myxogastromycetidae</taxon>
        <taxon>Physariida</taxon>
        <taxon>Physaraceae</taxon>
        <taxon>Physarum</taxon>
    </lineage>
</organism>
<dbReference type="EMBL" id="X53562">
    <property type="protein sequence ID" value="CAA37633.1"/>
    <property type="molecule type" value="mRNA"/>
</dbReference>
<dbReference type="PIR" id="S11441">
    <property type="entry name" value="S11441"/>
</dbReference>
<keyword id="KW-0732">Signal</keyword>
<feature type="signal peptide">
    <location>
        <begin position="1"/>
        <end position="14"/>
    </location>
</feature>
<feature type="chain" id="PRO_0000022069" description="Plasmin C">
    <location>
        <begin position="15"/>
        <end position="150"/>
    </location>
</feature>